<name>AROK_MOOTA</name>
<reference key="1">
    <citation type="journal article" date="2008" name="Environ. Microbiol.">
        <title>The complete genome sequence of Moorella thermoacetica (f. Clostridium thermoaceticum).</title>
        <authorList>
            <person name="Pierce E."/>
            <person name="Xie G."/>
            <person name="Barabote R.D."/>
            <person name="Saunders E."/>
            <person name="Han C.S."/>
            <person name="Detter J.C."/>
            <person name="Richardson P."/>
            <person name="Brettin T.S."/>
            <person name="Das A."/>
            <person name="Ljungdahl L.G."/>
            <person name="Ragsdale S.W."/>
        </authorList>
    </citation>
    <scope>NUCLEOTIDE SEQUENCE [LARGE SCALE GENOMIC DNA]</scope>
    <source>
        <strain>ATCC 39073 / JCM 9320</strain>
    </source>
</reference>
<gene>
    <name evidence="1" type="primary">aroK</name>
    <name type="ordered locus">Moth_1556</name>
</gene>
<organism>
    <name type="scientific">Moorella thermoacetica (strain ATCC 39073 / JCM 9320)</name>
    <dbReference type="NCBI Taxonomy" id="264732"/>
    <lineage>
        <taxon>Bacteria</taxon>
        <taxon>Bacillati</taxon>
        <taxon>Bacillota</taxon>
        <taxon>Clostridia</taxon>
        <taxon>Moorellales</taxon>
        <taxon>Moorellaceae</taxon>
        <taxon>Moorella</taxon>
    </lineage>
</organism>
<protein>
    <recommendedName>
        <fullName evidence="1">Shikimate kinase</fullName>
        <shortName evidence="1">SK</shortName>
        <ecNumber evidence="1">2.7.1.71</ecNumber>
    </recommendedName>
</protein>
<keyword id="KW-0028">Amino-acid biosynthesis</keyword>
<keyword id="KW-0057">Aromatic amino acid biosynthesis</keyword>
<keyword id="KW-0067">ATP-binding</keyword>
<keyword id="KW-0963">Cytoplasm</keyword>
<keyword id="KW-0418">Kinase</keyword>
<keyword id="KW-0460">Magnesium</keyword>
<keyword id="KW-0479">Metal-binding</keyword>
<keyword id="KW-0547">Nucleotide-binding</keyword>
<keyword id="KW-0808">Transferase</keyword>
<dbReference type="EC" id="2.7.1.71" evidence="1"/>
<dbReference type="EMBL" id="CP000232">
    <property type="protein sequence ID" value="ABC19865.1"/>
    <property type="molecule type" value="Genomic_DNA"/>
</dbReference>
<dbReference type="RefSeq" id="YP_430408.1">
    <property type="nucleotide sequence ID" value="NC_007644.1"/>
</dbReference>
<dbReference type="SMR" id="Q2RI74"/>
<dbReference type="STRING" id="264732.Moth_1556"/>
<dbReference type="EnsemblBacteria" id="ABC19865">
    <property type="protein sequence ID" value="ABC19865"/>
    <property type="gene ID" value="Moth_1556"/>
</dbReference>
<dbReference type="KEGG" id="mta:Moth_1556"/>
<dbReference type="PATRIC" id="fig|264732.11.peg.1683"/>
<dbReference type="eggNOG" id="COG0703">
    <property type="taxonomic scope" value="Bacteria"/>
</dbReference>
<dbReference type="HOGENOM" id="CLU_057607_4_0_9"/>
<dbReference type="OrthoDB" id="9800332at2"/>
<dbReference type="UniPathway" id="UPA00053">
    <property type="reaction ID" value="UER00088"/>
</dbReference>
<dbReference type="GO" id="GO:0005829">
    <property type="term" value="C:cytosol"/>
    <property type="evidence" value="ECO:0007669"/>
    <property type="project" value="TreeGrafter"/>
</dbReference>
<dbReference type="GO" id="GO:0005524">
    <property type="term" value="F:ATP binding"/>
    <property type="evidence" value="ECO:0007669"/>
    <property type="project" value="UniProtKB-UniRule"/>
</dbReference>
<dbReference type="GO" id="GO:0000287">
    <property type="term" value="F:magnesium ion binding"/>
    <property type="evidence" value="ECO:0007669"/>
    <property type="project" value="UniProtKB-UniRule"/>
</dbReference>
<dbReference type="GO" id="GO:0004765">
    <property type="term" value="F:shikimate kinase activity"/>
    <property type="evidence" value="ECO:0007669"/>
    <property type="project" value="UniProtKB-UniRule"/>
</dbReference>
<dbReference type="GO" id="GO:0008652">
    <property type="term" value="P:amino acid biosynthetic process"/>
    <property type="evidence" value="ECO:0007669"/>
    <property type="project" value="UniProtKB-KW"/>
</dbReference>
<dbReference type="GO" id="GO:0009073">
    <property type="term" value="P:aromatic amino acid family biosynthetic process"/>
    <property type="evidence" value="ECO:0007669"/>
    <property type="project" value="UniProtKB-KW"/>
</dbReference>
<dbReference type="GO" id="GO:0009423">
    <property type="term" value="P:chorismate biosynthetic process"/>
    <property type="evidence" value="ECO:0007669"/>
    <property type="project" value="UniProtKB-UniRule"/>
</dbReference>
<dbReference type="CDD" id="cd00464">
    <property type="entry name" value="SK"/>
    <property type="match status" value="1"/>
</dbReference>
<dbReference type="Gene3D" id="3.40.50.300">
    <property type="entry name" value="P-loop containing nucleotide triphosphate hydrolases"/>
    <property type="match status" value="1"/>
</dbReference>
<dbReference type="HAMAP" id="MF_00109">
    <property type="entry name" value="Shikimate_kinase"/>
    <property type="match status" value="1"/>
</dbReference>
<dbReference type="InterPro" id="IPR027417">
    <property type="entry name" value="P-loop_NTPase"/>
</dbReference>
<dbReference type="InterPro" id="IPR031322">
    <property type="entry name" value="Shikimate/glucono_kinase"/>
</dbReference>
<dbReference type="InterPro" id="IPR000623">
    <property type="entry name" value="Shikimate_kinase/TSH1"/>
</dbReference>
<dbReference type="InterPro" id="IPR023000">
    <property type="entry name" value="Shikimate_kinase_CS"/>
</dbReference>
<dbReference type="PANTHER" id="PTHR21087">
    <property type="entry name" value="SHIKIMATE KINASE"/>
    <property type="match status" value="1"/>
</dbReference>
<dbReference type="PANTHER" id="PTHR21087:SF16">
    <property type="entry name" value="SHIKIMATE KINASE 1, CHLOROPLASTIC"/>
    <property type="match status" value="1"/>
</dbReference>
<dbReference type="Pfam" id="PF01202">
    <property type="entry name" value="SKI"/>
    <property type="match status" value="1"/>
</dbReference>
<dbReference type="PRINTS" id="PR01100">
    <property type="entry name" value="SHIKIMTKNASE"/>
</dbReference>
<dbReference type="SUPFAM" id="SSF52540">
    <property type="entry name" value="P-loop containing nucleoside triphosphate hydrolases"/>
    <property type="match status" value="1"/>
</dbReference>
<dbReference type="PROSITE" id="PS01128">
    <property type="entry name" value="SHIKIMATE_KINASE"/>
    <property type="match status" value="1"/>
</dbReference>
<accession>Q2RI74</accession>
<comment type="function">
    <text evidence="1">Catalyzes the specific phosphorylation of the 3-hydroxyl group of shikimic acid using ATP as a cosubstrate.</text>
</comment>
<comment type="catalytic activity">
    <reaction evidence="1">
        <text>shikimate + ATP = 3-phosphoshikimate + ADP + H(+)</text>
        <dbReference type="Rhea" id="RHEA:13121"/>
        <dbReference type="ChEBI" id="CHEBI:15378"/>
        <dbReference type="ChEBI" id="CHEBI:30616"/>
        <dbReference type="ChEBI" id="CHEBI:36208"/>
        <dbReference type="ChEBI" id="CHEBI:145989"/>
        <dbReference type="ChEBI" id="CHEBI:456216"/>
        <dbReference type="EC" id="2.7.1.71"/>
    </reaction>
</comment>
<comment type="cofactor">
    <cofactor evidence="1">
        <name>Mg(2+)</name>
        <dbReference type="ChEBI" id="CHEBI:18420"/>
    </cofactor>
    <text evidence="1">Binds 1 Mg(2+) ion per subunit.</text>
</comment>
<comment type="pathway">
    <text evidence="1">Metabolic intermediate biosynthesis; chorismate biosynthesis; chorismate from D-erythrose 4-phosphate and phosphoenolpyruvate: step 5/7.</text>
</comment>
<comment type="subunit">
    <text evidence="1">Monomer.</text>
</comment>
<comment type="subcellular location">
    <subcellularLocation>
        <location evidence="1">Cytoplasm</location>
    </subcellularLocation>
</comment>
<comment type="similarity">
    <text evidence="1">Belongs to the shikimate kinase family.</text>
</comment>
<feature type="chain" id="PRO_0000237895" description="Shikimate kinase">
    <location>
        <begin position="1"/>
        <end position="173"/>
    </location>
</feature>
<feature type="binding site" evidence="1">
    <location>
        <begin position="12"/>
        <end position="17"/>
    </location>
    <ligand>
        <name>ATP</name>
        <dbReference type="ChEBI" id="CHEBI:30616"/>
    </ligand>
</feature>
<feature type="binding site" evidence="1">
    <location>
        <position position="16"/>
    </location>
    <ligand>
        <name>Mg(2+)</name>
        <dbReference type="ChEBI" id="CHEBI:18420"/>
    </ligand>
</feature>
<feature type="binding site" evidence="1">
    <location>
        <position position="34"/>
    </location>
    <ligand>
        <name>substrate</name>
    </ligand>
</feature>
<feature type="binding site" evidence="1">
    <location>
        <position position="58"/>
    </location>
    <ligand>
        <name>substrate</name>
    </ligand>
</feature>
<feature type="binding site" evidence="1">
    <location>
        <position position="80"/>
    </location>
    <ligand>
        <name>substrate</name>
    </ligand>
</feature>
<feature type="binding site" evidence="1">
    <location>
        <position position="118"/>
    </location>
    <ligand>
        <name>ATP</name>
        <dbReference type="ChEBI" id="CHEBI:30616"/>
    </ligand>
</feature>
<feature type="binding site" evidence="1">
    <location>
        <position position="136"/>
    </location>
    <ligand>
        <name>substrate</name>
    </ligand>
</feature>
<proteinExistence type="inferred from homology"/>
<evidence type="ECO:0000255" key="1">
    <source>
        <dbReference type="HAMAP-Rule" id="MF_00109"/>
    </source>
</evidence>
<sequence length="173" mass="19114">MPGNIVLIGFMGSGKTTVGRLLARDLGWSFLDTDTMVEERLGLPVKEIFAREGEEFFREVEKEAVARVATARQAVIATGGGAVLCGVNVKLLREGNKVVWLQVRPETALKRAGLDDSRPLLQGREPRDIAALLRRREPYYAFADIYIDTDGKEAAAVAREIKEALKAWLESLT</sequence>